<reference key="1">
    <citation type="journal article" date="2006" name="Genome Biol.">
        <title>The genome of Rhizobium leguminosarum has recognizable core and accessory components.</title>
        <authorList>
            <person name="Young J.P.W."/>
            <person name="Crossman L.C."/>
            <person name="Johnston A.W.B."/>
            <person name="Thomson N.R."/>
            <person name="Ghazoui Z.F."/>
            <person name="Hull K.H."/>
            <person name="Wexler M."/>
            <person name="Curson A.R.J."/>
            <person name="Todd J.D."/>
            <person name="Poole P.S."/>
            <person name="Mauchline T.H."/>
            <person name="East A.K."/>
            <person name="Quail M.A."/>
            <person name="Churcher C."/>
            <person name="Arrowsmith C."/>
            <person name="Cherevach I."/>
            <person name="Chillingworth T."/>
            <person name="Clarke K."/>
            <person name="Cronin A."/>
            <person name="Davis P."/>
            <person name="Fraser A."/>
            <person name="Hance Z."/>
            <person name="Hauser H."/>
            <person name="Jagels K."/>
            <person name="Moule S."/>
            <person name="Mungall K."/>
            <person name="Norbertczak H."/>
            <person name="Rabbinowitsch E."/>
            <person name="Sanders M."/>
            <person name="Simmonds M."/>
            <person name="Whitehead S."/>
            <person name="Parkhill J."/>
        </authorList>
    </citation>
    <scope>NUCLEOTIDE SEQUENCE [LARGE SCALE GENOMIC DNA]</scope>
    <source>
        <strain>DSM 114642 / LMG 32736 / 3841</strain>
    </source>
</reference>
<keyword id="KW-0687">Ribonucleoprotein</keyword>
<keyword id="KW-0689">Ribosomal protein</keyword>
<proteinExistence type="inferred from homology"/>
<sequence length="125" mass="12777">MADLAKIVDDLSSLTVLEAAELSKLLEEKWGVSAAAPVAVAAAAGGAAAAVVEEEKTEFDVILVEAGANKINVIKEVRAITGLGLKEAKDLVEAAPKAVKEGVNKAEAADIKKKLEDAGAKADVK</sequence>
<organism>
    <name type="scientific">Rhizobium johnstonii (strain DSM 114642 / LMG 32736 / 3841)</name>
    <name type="common">Rhizobium leguminosarum bv. viciae</name>
    <dbReference type="NCBI Taxonomy" id="216596"/>
    <lineage>
        <taxon>Bacteria</taxon>
        <taxon>Pseudomonadati</taxon>
        <taxon>Pseudomonadota</taxon>
        <taxon>Alphaproteobacteria</taxon>
        <taxon>Hyphomicrobiales</taxon>
        <taxon>Rhizobiaceae</taxon>
        <taxon>Rhizobium/Agrobacterium group</taxon>
        <taxon>Rhizobium</taxon>
        <taxon>Rhizobium johnstonii</taxon>
    </lineage>
</organism>
<protein>
    <recommendedName>
        <fullName evidence="1">Large ribosomal subunit protein bL12</fullName>
    </recommendedName>
    <alternativeName>
        <fullName evidence="2">50S ribosomal protein L7/L12</fullName>
    </alternativeName>
</protein>
<dbReference type="EMBL" id="AM236080">
    <property type="protein sequence ID" value="CAK07260.1"/>
    <property type="molecule type" value="Genomic_DNA"/>
</dbReference>
<dbReference type="RefSeq" id="WP_003547523.1">
    <property type="nucleotide sequence ID" value="NC_008380.1"/>
</dbReference>
<dbReference type="SMR" id="Q1MIF0"/>
<dbReference type="EnsemblBacteria" id="CAK07260">
    <property type="protein sequence ID" value="CAK07260"/>
    <property type="gene ID" value="RL1765"/>
</dbReference>
<dbReference type="GeneID" id="67484953"/>
<dbReference type="KEGG" id="rle:RL1765"/>
<dbReference type="eggNOG" id="COG0222">
    <property type="taxonomic scope" value="Bacteria"/>
</dbReference>
<dbReference type="HOGENOM" id="CLU_086499_3_0_5"/>
<dbReference type="Proteomes" id="UP000006575">
    <property type="component" value="Chromosome"/>
</dbReference>
<dbReference type="GO" id="GO:0022625">
    <property type="term" value="C:cytosolic large ribosomal subunit"/>
    <property type="evidence" value="ECO:0007669"/>
    <property type="project" value="TreeGrafter"/>
</dbReference>
<dbReference type="GO" id="GO:0003729">
    <property type="term" value="F:mRNA binding"/>
    <property type="evidence" value="ECO:0007669"/>
    <property type="project" value="TreeGrafter"/>
</dbReference>
<dbReference type="GO" id="GO:0003735">
    <property type="term" value="F:structural constituent of ribosome"/>
    <property type="evidence" value="ECO:0007669"/>
    <property type="project" value="InterPro"/>
</dbReference>
<dbReference type="GO" id="GO:0006412">
    <property type="term" value="P:translation"/>
    <property type="evidence" value="ECO:0007669"/>
    <property type="project" value="UniProtKB-UniRule"/>
</dbReference>
<dbReference type="CDD" id="cd00387">
    <property type="entry name" value="Ribosomal_L7_L12"/>
    <property type="match status" value="1"/>
</dbReference>
<dbReference type="FunFam" id="1.20.5.710:FF:000007">
    <property type="entry name" value="50S ribosomal protein L7/L12"/>
    <property type="match status" value="1"/>
</dbReference>
<dbReference type="FunFam" id="3.30.1390.10:FF:000001">
    <property type="entry name" value="50S ribosomal protein L7/L12"/>
    <property type="match status" value="1"/>
</dbReference>
<dbReference type="Gene3D" id="3.30.1390.10">
    <property type="match status" value="1"/>
</dbReference>
<dbReference type="Gene3D" id="1.20.5.710">
    <property type="entry name" value="Single helix bin"/>
    <property type="match status" value="1"/>
</dbReference>
<dbReference type="HAMAP" id="MF_00368">
    <property type="entry name" value="Ribosomal_bL12"/>
    <property type="match status" value="1"/>
</dbReference>
<dbReference type="InterPro" id="IPR000206">
    <property type="entry name" value="Ribosomal_bL12"/>
</dbReference>
<dbReference type="InterPro" id="IPR013823">
    <property type="entry name" value="Ribosomal_bL12_C"/>
</dbReference>
<dbReference type="InterPro" id="IPR014719">
    <property type="entry name" value="Ribosomal_bL12_C/ClpS-like"/>
</dbReference>
<dbReference type="InterPro" id="IPR008932">
    <property type="entry name" value="Ribosomal_bL12_oligo"/>
</dbReference>
<dbReference type="InterPro" id="IPR036235">
    <property type="entry name" value="Ribosomal_bL12_oligo_N_sf"/>
</dbReference>
<dbReference type="NCBIfam" id="TIGR00855">
    <property type="entry name" value="L12"/>
    <property type="match status" value="1"/>
</dbReference>
<dbReference type="PANTHER" id="PTHR45987">
    <property type="entry name" value="39S RIBOSOMAL PROTEIN L12"/>
    <property type="match status" value="1"/>
</dbReference>
<dbReference type="PANTHER" id="PTHR45987:SF4">
    <property type="entry name" value="LARGE RIBOSOMAL SUBUNIT PROTEIN BL12M"/>
    <property type="match status" value="1"/>
</dbReference>
<dbReference type="Pfam" id="PF00542">
    <property type="entry name" value="Ribosomal_L12"/>
    <property type="match status" value="1"/>
</dbReference>
<dbReference type="Pfam" id="PF16320">
    <property type="entry name" value="Ribosomal_L12_N"/>
    <property type="match status" value="1"/>
</dbReference>
<dbReference type="SUPFAM" id="SSF54736">
    <property type="entry name" value="ClpS-like"/>
    <property type="match status" value="1"/>
</dbReference>
<dbReference type="SUPFAM" id="SSF48300">
    <property type="entry name" value="Ribosomal protein L7/12, oligomerisation (N-terminal) domain"/>
    <property type="match status" value="1"/>
</dbReference>
<name>RL7_RHIJ3</name>
<accession>Q1MIF0</accession>
<gene>
    <name evidence="1" type="primary">rplL</name>
    <name type="ordered locus">RL1765</name>
</gene>
<evidence type="ECO:0000255" key="1">
    <source>
        <dbReference type="HAMAP-Rule" id="MF_00368"/>
    </source>
</evidence>
<evidence type="ECO:0000305" key="2"/>
<feature type="chain" id="PRO_1000007070" description="Large ribosomal subunit protein bL12">
    <location>
        <begin position="1"/>
        <end position="125"/>
    </location>
</feature>
<comment type="function">
    <text evidence="1">Forms part of the ribosomal stalk which helps the ribosome interact with GTP-bound translation factors. Is thus essential for accurate translation.</text>
</comment>
<comment type="subunit">
    <text evidence="1">Homodimer. Part of the ribosomal stalk of the 50S ribosomal subunit. Forms a multimeric L10(L12)X complex, where L10 forms an elongated spine to which 2 to 4 L12 dimers bind in a sequential fashion. Binds GTP-bound translation factors.</text>
</comment>
<comment type="similarity">
    <text evidence="1">Belongs to the bacterial ribosomal protein bL12 family.</text>
</comment>